<comment type="catalytic activity">
    <reaction evidence="1">
        <text>(S)-4-hydroxy-2-oxopentanoate = acetaldehyde + pyruvate</text>
        <dbReference type="Rhea" id="RHEA:22624"/>
        <dbReference type="ChEBI" id="CHEBI:15343"/>
        <dbReference type="ChEBI" id="CHEBI:15361"/>
        <dbReference type="ChEBI" id="CHEBI:73143"/>
        <dbReference type="EC" id="4.1.3.39"/>
    </reaction>
</comment>
<comment type="similarity">
    <text evidence="1">Belongs to the 4-hydroxy-2-oxovalerate aldolase family.</text>
</comment>
<geneLocation type="plasmid">
    <name>pMCS1</name>
</geneLocation>
<sequence length="349" mass="37196">MTETVSRPHATEGAALYIQDVTLRDGMHAMRHRISPEKVAAIAGALDTAGVDAIEVTHGDGLAGHSLTYGPGSNTDWEWIEAAADVVHRAKLTTLLLPGVGTVRELEHAYKLGVTSVRVATHCTEADVSAQHIGTARELGMDVSGFLMMSHLAEPSHLAAQAKLMESYGAHCVYVTDSGGRLTMGSVRDRVRAYRDVLDAGTQIGIHAHQNLSLSVANTVVAVEEGVTRVDASLAGHGAGAGNCPIEPFIAVADLHGWKHNCDLFGLQDAADDIVRPLQDRPVQVDRETLTLGYAGVYSSFLRHAEAAAKQYGLDTRAILLAVGERGLVGGQEDLIPDIALDLQQNLRR</sequence>
<gene>
    <name type="ordered locus">Mmcs_5438</name>
</gene>
<organism>
    <name type="scientific">Mycobacterium sp. (strain MCS)</name>
    <dbReference type="NCBI Taxonomy" id="164756"/>
    <lineage>
        <taxon>Bacteria</taxon>
        <taxon>Bacillati</taxon>
        <taxon>Actinomycetota</taxon>
        <taxon>Actinomycetes</taxon>
        <taxon>Mycobacteriales</taxon>
        <taxon>Mycobacteriaceae</taxon>
        <taxon>Mycobacterium</taxon>
    </lineage>
</organism>
<proteinExistence type="inferred from homology"/>
<reference key="1">
    <citation type="submission" date="2006-06" db="EMBL/GenBank/DDBJ databases">
        <title>Complete sequence of plasmid of Mycobacterium sp. MCS.</title>
        <authorList>
            <consortium name="US DOE Joint Genome Institute"/>
            <person name="Copeland A."/>
            <person name="Lucas S."/>
            <person name="Lapidus A."/>
            <person name="Barry K."/>
            <person name="Detter J.C."/>
            <person name="Glavina del Rio T."/>
            <person name="Hammon N."/>
            <person name="Israni S."/>
            <person name="Dalin E."/>
            <person name="Tice H."/>
            <person name="Pitluck S."/>
            <person name="Martinez M."/>
            <person name="Schmutz J."/>
            <person name="Larimer F."/>
            <person name="Land M."/>
            <person name="Hauser L."/>
            <person name="Kyrpides N."/>
            <person name="Kim E."/>
            <person name="Miller C.D."/>
            <person name="Hughes J.E."/>
            <person name="Anderson A.J."/>
            <person name="Sims R.C."/>
            <person name="Richardson P."/>
        </authorList>
    </citation>
    <scope>NUCLEOTIDE SEQUENCE [LARGE SCALE GENOMIC DNA]</scope>
    <source>
        <strain>MCS</strain>
    </source>
</reference>
<evidence type="ECO:0000255" key="1">
    <source>
        <dbReference type="HAMAP-Rule" id="MF_01656"/>
    </source>
</evidence>
<dbReference type="EC" id="4.1.3.39" evidence="1"/>
<dbReference type="EMBL" id="CP000385">
    <property type="protein sequence ID" value="ABG11538.1"/>
    <property type="molecule type" value="Genomic_DNA"/>
</dbReference>
<dbReference type="SMR" id="Q1B0P6"/>
<dbReference type="KEGG" id="mmc:Mmcs_5438"/>
<dbReference type="HOGENOM" id="CLU_049173_0_0_11"/>
<dbReference type="BioCyc" id="MSP164756:G1G6O-5551-MONOMER"/>
<dbReference type="GO" id="GO:0003852">
    <property type="term" value="F:2-isopropylmalate synthase activity"/>
    <property type="evidence" value="ECO:0007669"/>
    <property type="project" value="TreeGrafter"/>
</dbReference>
<dbReference type="GO" id="GO:0008701">
    <property type="term" value="F:4-hydroxy-2-oxovalerate aldolase activity"/>
    <property type="evidence" value="ECO:0007669"/>
    <property type="project" value="UniProtKB-UniRule"/>
</dbReference>
<dbReference type="GO" id="GO:0030145">
    <property type="term" value="F:manganese ion binding"/>
    <property type="evidence" value="ECO:0007669"/>
    <property type="project" value="UniProtKB-UniRule"/>
</dbReference>
<dbReference type="GO" id="GO:0009056">
    <property type="term" value="P:catabolic process"/>
    <property type="evidence" value="ECO:0007669"/>
    <property type="project" value="UniProtKB-KW"/>
</dbReference>
<dbReference type="GO" id="GO:0009098">
    <property type="term" value="P:L-leucine biosynthetic process"/>
    <property type="evidence" value="ECO:0007669"/>
    <property type="project" value="TreeGrafter"/>
</dbReference>
<dbReference type="CDD" id="cd07943">
    <property type="entry name" value="DRE_TIM_HOA"/>
    <property type="match status" value="1"/>
</dbReference>
<dbReference type="Gene3D" id="1.10.8.60">
    <property type="match status" value="1"/>
</dbReference>
<dbReference type="Gene3D" id="3.20.20.70">
    <property type="entry name" value="Aldolase class I"/>
    <property type="match status" value="1"/>
</dbReference>
<dbReference type="HAMAP" id="MF_01656">
    <property type="entry name" value="HOA"/>
    <property type="match status" value="1"/>
</dbReference>
<dbReference type="InterPro" id="IPR050073">
    <property type="entry name" value="2-IPM_HCS-like"/>
</dbReference>
<dbReference type="InterPro" id="IPR017629">
    <property type="entry name" value="4OH_2_O-val_aldolase"/>
</dbReference>
<dbReference type="InterPro" id="IPR013785">
    <property type="entry name" value="Aldolase_TIM"/>
</dbReference>
<dbReference type="InterPro" id="IPR012425">
    <property type="entry name" value="DmpG_comm"/>
</dbReference>
<dbReference type="InterPro" id="IPR035685">
    <property type="entry name" value="DRE_TIM_HOA"/>
</dbReference>
<dbReference type="InterPro" id="IPR000891">
    <property type="entry name" value="PYR_CT"/>
</dbReference>
<dbReference type="NCBIfam" id="TIGR03217">
    <property type="entry name" value="4OH_2_O_val_ald"/>
    <property type="match status" value="1"/>
</dbReference>
<dbReference type="NCBIfam" id="NF006049">
    <property type="entry name" value="PRK08195.1"/>
    <property type="match status" value="1"/>
</dbReference>
<dbReference type="PANTHER" id="PTHR10277:SF9">
    <property type="entry name" value="2-ISOPROPYLMALATE SYNTHASE 1, CHLOROPLASTIC-RELATED"/>
    <property type="match status" value="1"/>
</dbReference>
<dbReference type="PANTHER" id="PTHR10277">
    <property type="entry name" value="HOMOCITRATE SYNTHASE-RELATED"/>
    <property type="match status" value="1"/>
</dbReference>
<dbReference type="Pfam" id="PF07836">
    <property type="entry name" value="DmpG_comm"/>
    <property type="match status" value="1"/>
</dbReference>
<dbReference type="Pfam" id="PF00682">
    <property type="entry name" value="HMGL-like"/>
    <property type="match status" value="1"/>
</dbReference>
<dbReference type="SUPFAM" id="SSF51569">
    <property type="entry name" value="Aldolase"/>
    <property type="match status" value="1"/>
</dbReference>
<dbReference type="SUPFAM" id="SSF89000">
    <property type="entry name" value="post-HMGL domain-like"/>
    <property type="match status" value="1"/>
</dbReference>
<dbReference type="PROSITE" id="PS50991">
    <property type="entry name" value="PYR_CT"/>
    <property type="match status" value="1"/>
</dbReference>
<name>HOA2_MYCSS</name>
<protein>
    <recommendedName>
        <fullName evidence="1">4-hydroxy-2-oxovalerate aldolase 2</fullName>
        <shortName evidence="1">HOA 2</shortName>
        <ecNumber evidence="1">4.1.3.39</ecNumber>
    </recommendedName>
    <alternativeName>
        <fullName evidence="1">4-hydroxy-2-keto-pentanoic acid aldolase 2</fullName>
    </alternativeName>
    <alternativeName>
        <fullName evidence="1">4-hydroxy-2-oxopentanoate aldolase 2</fullName>
    </alternativeName>
</protein>
<keyword id="KW-0058">Aromatic hydrocarbons catabolism</keyword>
<keyword id="KW-0456">Lyase</keyword>
<keyword id="KW-0464">Manganese</keyword>
<keyword id="KW-0479">Metal-binding</keyword>
<keyword id="KW-0614">Plasmid</keyword>
<feature type="chain" id="PRO_0000387860" description="4-hydroxy-2-oxovalerate aldolase 2">
    <location>
        <begin position="1"/>
        <end position="349"/>
    </location>
</feature>
<feature type="domain" description="Pyruvate carboxyltransferase" evidence="1">
    <location>
        <begin position="16"/>
        <end position="268"/>
    </location>
</feature>
<feature type="active site" description="Proton acceptor" evidence="1">
    <location>
        <position position="28"/>
    </location>
</feature>
<feature type="binding site" evidence="1">
    <location>
        <begin position="24"/>
        <end position="25"/>
    </location>
    <ligand>
        <name>substrate</name>
    </ligand>
</feature>
<feature type="binding site" evidence="1">
    <location>
        <position position="25"/>
    </location>
    <ligand>
        <name>Mn(2+)</name>
        <dbReference type="ChEBI" id="CHEBI:29035"/>
    </ligand>
</feature>
<feature type="binding site" evidence="1">
    <location>
        <position position="178"/>
    </location>
    <ligand>
        <name>substrate</name>
    </ligand>
</feature>
<feature type="binding site" evidence="1">
    <location>
        <position position="207"/>
    </location>
    <ligand>
        <name>Mn(2+)</name>
        <dbReference type="ChEBI" id="CHEBI:29035"/>
    </ligand>
</feature>
<feature type="binding site" evidence="1">
    <location>
        <position position="207"/>
    </location>
    <ligand>
        <name>substrate</name>
    </ligand>
</feature>
<feature type="binding site" evidence="1">
    <location>
        <position position="209"/>
    </location>
    <ligand>
        <name>Mn(2+)</name>
        <dbReference type="ChEBI" id="CHEBI:29035"/>
    </ligand>
</feature>
<feature type="binding site" evidence="1">
    <location>
        <position position="298"/>
    </location>
    <ligand>
        <name>substrate</name>
    </ligand>
</feature>
<feature type="site" description="Transition state stabilizer" evidence="1">
    <location>
        <position position="24"/>
    </location>
</feature>
<accession>Q1B0P6</accession>